<proteinExistence type="inferred from homology"/>
<evidence type="ECO:0000250" key="1"/>
<evidence type="ECO:0000255" key="2">
    <source>
        <dbReference type="HAMAP-Rule" id="MF_02004"/>
    </source>
</evidence>
<evidence type="ECO:0000305" key="3"/>
<organism>
    <name type="scientific">Thermus thermophilus (strain ATCC 27634 / DSM 579 / HB8)</name>
    <dbReference type="NCBI Taxonomy" id="300852"/>
    <lineage>
        <taxon>Bacteria</taxon>
        <taxon>Thermotogati</taxon>
        <taxon>Deinococcota</taxon>
        <taxon>Deinococci</taxon>
        <taxon>Thermales</taxon>
        <taxon>Thermaceae</taxon>
        <taxon>Thermus</taxon>
    </lineage>
</organism>
<reference key="1">
    <citation type="submission" date="1997-01" db="EMBL/GenBank/DDBJ databases">
        <authorList>
            <person name="Dauvergne M.T."/>
            <person name="Haertlein M."/>
            <person name="Leberman R."/>
        </authorList>
    </citation>
    <scope>NUCLEOTIDE SEQUENCE [GENOMIC DNA]</scope>
</reference>
<reference key="2">
    <citation type="submission" date="2004-11" db="EMBL/GenBank/DDBJ databases">
        <title>Complete genome sequence of Thermus thermophilus HB8.</title>
        <authorList>
            <person name="Masui R."/>
            <person name="Kurokawa K."/>
            <person name="Nakagawa N."/>
            <person name="Tokunaga F."/>
            <person name="Koyama Y."/>
            <person name="Shibata T."/>
            <person name="Oshima T."/>
            <person name="Yokoyama S."/>
            <person name="Yasunaga T."/>
            <person name="Kuramitsu S."/>
        </authorList>
    </citation>
    <scope>NUCLEOTIDE SEQUENCE [LARGE SCALE GENOMIC DNA]</scope>
    <source>
        <strain>ATCC 27634 / DSM 579 / HB8</strain>
    </source>
</reference>
<keyword id="KW-0030">Aminoacyl-tRNA synthetase</keyword>
<keyword id="KW-0067">ATP-binding</keyword>
<keyword id="KW-0175">Coiled coil</keyword>
<keyword id="KW-0963">Cytoplasm</keyword>
<keyword id="KW-0436">Ligase</keyword>
<keyword id="KW-0479">Metal-binding</keyword>
<keyword id="KW-0547">Nucleotide-binding</keyword>
<keyword id="KW-0648">Protein biosynthesis</keyword>
<keyword id="KW-1185">Reference proteome</keyword>
<keyword id="KW-0862">Zinc</keyword>
<accession>Q5SJ45</accession>
<comment type="function">
    <text evidence="2">Catalyzes the attachment of valine to tRNA(Val). As ValRS can inadvertently accommodate and process structurally similar amino acids such as threonine, to avoid such errors, it has a 'posttransfer' editing activity that hydrolyzes mischarged Thr-tRNA(Val) in a tRNA-dependent manner.</text>
</comment>
<comment type="catalytic activity">
    <reaction evidence="2">
        <text>tRNA(Val) + L-valine + ATP = L-valyl-tRNA(Val) + AMP + diphosphate</text>
        <dbReference type="Rhea" id="RHEA:10704"/>
        <dbReference type="Rhea" id="RHEA-COMP:9672"/>
        <dbReference type="Rhea" id="RHEA-COMP:9708"/>
        <dbReference type="ChEBI" id="CHEBI:30616"/>
        <dbReference type="ChEBI" id="CHEBI:33019"/>
        <dbReference type="ChEBI" id="CHEBI:57762"/>
        <dbReference type="ChEBI" id="CHEBI:78442"/>
        <dbReference type="ChEBI" id="CHEBI:78537"/>
        <dbReference type="ChEBI" id="CHEBI:456215"/>
        <dbReference type="EC" id="6.1.1.9"/>
    </reaction>
</comment>
<comment type="cofactor">
    <cofactor evidence="1">
        <name>Zn(2+)</name>
        <dbReference type="ChEBI" id="CHEBI:29105"/>
    </cofactor>
    <text evidence="1">Binds 2 Zn(2+) ions per subunit.</text>
</comment>
<comment type="subunit">
    <text evidence="2">Monomer.</text>
</comment>
<comment type="subcellular location">
    <subcellularLocation>
        <location evidence="2">Cytoplasm</location>
    </subcellularLocation>
</comment>
<comment type="domain">
    <text evidence="2">ValRS has two distinct active sites: one for aminoacylation and one for editing. The misactivated threonine is translocated from the active site to the editing site.</text>
</comment>
<comment type="domain">
    <text evidence="2">The C-terminal coiled-coil domain is crucial for aminoacylation activity.</text>
</comment>
<comment type="similarity">
    <text evidence="2">Belongs to the class-I aminoacyl-tRNA synthetase family. ValS type 1 subfamily.</text>
</comment>
<gene>
    <name evidence="2" type="primary">valS</name>
    <name type="ordered locus">TTHA1169</name>
</gene>
<sequence length="862" mass="98775">MDLPKAYDPKSVEPKWAEKWAKNPFVANPKSGKPPFVIFMPPPNVTGSLHMGHALDNSLQDALIRYKRMRGFEAVWLPGTDHAGIATQVVVERLLLKEGKTRHDLGREKFLERVWQWKEESGGTILKQLKRLGASADWSREAFTMDEKRSRAVRYAFSRYYHEGLAYRAPRLVNWCPRCETTLSDLEVETEPTPGKLYTLRYEVEGGGFIEIATVRPETVFADQAIAVHPEDERYRHLLGKRARIPLTEVWIPILADPAVEKDFGTGALKVTPAHDPLDYEIGERHGLKPVSVINLEGRMEGERVPEALRGLDRFEARRKAVELFREAGHLVKEEDYTIALATCSRCGTPIEYAIFPQWWLRMRPLAEEVLKGLRRGDIAFVPERWKKVNMDWLENVKDWNISRQLWWGHQIPAWYCEDCQAVNVPRPERYLEDPTSCEACGSPRLKRDEDVFDTWFSSALWPLSTLGWPEETEDLKAFYPGDVLVTGYDILFLWVSRMEVSGYHFMGERPFKTVLLHGLVLDEKGQKMSKSKGNVIDPLEMVERYGADALRFALIYLATGGQDIRLDLRWLEMARNFANKLYNAARFVLLSREGFQAKEDTPTLADRFMRSRLSRGVEEITALYEALDLAQAAREVYELVWSEFCDWYLEAAKPALKAGNAHTLRTLEEVLAVLLKLLHPMMPFLTSELYQALTGKEELALEAWPEPGGRDEEAERAFEALKQAVTAVRALKAEAGLPPAQEVRVYLEGETAPVEENLEVFRFLSRADLLPERPAKALVKAMPRVTARMPLEGLLDVEEWRRRQEKRLKELLALAERSQRKLASPGFREKAPKEVVEAEEARLKENLEQAERIREALSQIG</sequence>
<name>SYV_THET8</name>
<dbReference type="EC" id="6.1.1.9" evidence="2"/>
<dbReference type="EMBL" id="Y10900">
    <property type="protein sequence ID" value="CAA71837.1"/>
    <property type="molecule type" value="Genomic_DNA"/>
</dbReference>
<dbReference type="EMBL" id="AP008226">
    <property type="protein sequence ID" value="BAD70992.1"/>
    <property type="molecule type" value="Genomic_DNA"/>
</dbReference>
<dbReference type="RefSeq" id="WP_011228487.1">
    <property type="nucleotide sequence ID" value="NC_006461.1"/>
</dbReference>
<dbReference type="RefSeq" id="YP_144435.1">
    <property type="nucleotide sequence ID" value="NC_006461.1"/>
</dbReference>
<dbReference type="SMR" id="Q5SJ45"/>
<dbReference type="EnsemblBacteria" id="BAD70992">
    <property type="protein sequence ID" value="BAD70992"/>
    <property type="gene ID" value="BAD70992"/>
</dbReference>
<dbReference type="GeneID" id="3169414"/>
<dbReference type="KEGG" id="ttj:TTHA1169"/>
<dbReference type="PATRIC" id="fig|300852.9.peg.1149"/>
<dbReference type="eggNOG" id="COG0525">
    <property type="taxonomic scope" value="Bacteria"/>
</dbReference>
<dbReference type="HOGENOM" id="CLU_001493_0_2_0"/>
<dbReference type="PhylomeDB" id="Q5SJ45"/>
<dbReference type="Proteomes" id="UP000000532">
    <property type="component" value="Chromosome"/>
</dbReference>
<dbReference type="GO" id="GO:0005829">
    <property type="term" value="C:cytosol"/>
    <property type="evidence" value="ECO:0007669"/>
    <property type="project" value="TreeGrafter"/>
</dbReference>
<dbReference type="GO" id="GO:0002161">
    <property type="term" value="F:aminoacyl-tRNA deacylase activity"/>
    <property type="evidence" value="ECO:0007669"/>
    <property type="project" value="InterPro"/>
</dbReference>
<dbReference type="GO" id="GO:0005524">
    <property type="term" value="F:ATP binding"/>
    <property type="evidence" value="ECO:0007669"/>
    <property type="project" value="UniProtKB-UniRule"/>
</dbReference>
<dbReference type="GO" id="GO:0046872">
    <property type="term" value="F:metal ion binding"/>
    <property type="evidence" value="ECO:0007669"/>
    <property type="project" value="UniProtKB-KW"/>
</dbReference>
<dbReference type="GO" id="GO:0004832">
    <property type="term" value="F:valine-tRNA ligase activity"/>
    <property type="evidence" value="ECO:0007669"/>
    <property type="project" value="UniProtKB-UniRule"/>
</dbReference>
<dbReference type="GO" id="GO:0006438">
    <property type="term" value="P:valyl-tRNA aminoacylation"/>
    <property type="evidence" value="ECO:0007669"/>
    <property type="project" value="UniProtKB-UniRule"/>
</dbReference>
<dbReference type="CDD" id="cd07962">
    <property type="entry name" value="Anticodon_Ia_Val"/>
    <property type="match status" value="1"/>
</dbReference>
<dbReference type="CDD" id="cd00817">
    <property type="entry name" value="ValRS_core"/>
    <property type="match status" value="1"/>
</dbReference>
<dbReference type="FunFam" id="3.40.50.620:FF:000020">
    <property type="entry name" value="Valine--tRNA ligase, mitochondrial"/>
    <property type="match status" value="1"/>
</dbReference>
<dbReference type="Gene3D" id="3.30.1170.10">
    <property type="match status" value="1"/>
</dbReference>
<dbReference type="Gene3D" id="3.40.50.620">
    <property type="entry name" value="HUPs"/>
    <property type="match status" value="2"/>
</dbReference>
<dbReference type="Gene3D" id="1.10.730.10">
    <property type="entry name" value="Isoleucyl-tRNA Synthetase, Domain 1"/>
    <property type="match status" value="1"/>
</dbReference>
<dbReference type="Gene3D" id="1.10.287.380">
    <property type="entry name" value="Valyl-tRNA synthetase, C-terminal domain"/>
    <property type="match status" value="1"/>
</dbReference>
<dbReference type="Gene3D" id="3.90.740.10">
    <property type="entry name" value="Valyl/Leucyl/Isoleucyl-tRNA synthetase, editing domain"/>
    <property type="match status" value="1"/>
</dbReference>
<dbReference type="HAMAP" id="MF_02004">
    <property type="entry name" value="Val_tRNA_synth_type1"/>
    <property type="match status" value="1"/>
</dbReference>
<dbReference type="InterPro" id="IPR001412">
    <property type="entry name" value="aa-tRNA-synth_I_CS"/>
</dbReference>
<dbReference type="InterPro" id="IPR002300">
    <property type="entry name" value="aa-tRNA-synth_Ia"/>
</dbReference>
<dbReference type="InterPro" id="IPR033705">
    <property type="entry name" value="Anticodon_Ia_Val"/>
</dbReference>
<dbReference type="InterPro" id="IPR013155">
    <property type="entry name" value="M/V/L/I-tRNA-synth_anticd-bd"/>
</dbReference>
<dbReference type="InterPro" id="IPR014729">
    <property type="entry name" value="Rossmann-like_a/b/a_fold"/>
</dbReference>
<dbReference type="InterPro" id="IPR010978">
    <property type="entry name" value="tRNA-bd_arm"/>
</dbReference>
<dbReference type="InterPro" id="IPR009080">
    <property type="entry name" value="tRNAsynth_Ia_anticodon-bd"/>
</dbReference>
<dbReference type="InterPro" id="IPR037118">
    <property type="entry name" value="Val-tRNA_synth_C_sf"/>
</dbReference>
<dbReference type="InterPro" id="IPR019499">
    <property type="entry name" value="Val-tRNA_synth_tRNA-bd"/>
</dbReference>
<dbReference type="InterPro" id="IPR009008">
    <property type="entry name" value="Val/Leu/Ile-tRNA-synth_edit"/>
</dbReference>
<dbReference type="InterPro" id="IPR002303">
    <property type="entry name" value="Valyl-tRNA_ligase"/>
</dbReference>
<dbReference type="NCBIfam" id="NF004349">
    <property type="entry name" value="PRK05729.1"/>
    <property type="match status" value="1"/>
</dbReference>
<dbReference type="NCBIfam" id="TIGR00422">
    <property type="entry name" value="valS"/>
    <property type="match status" value="1"/>
</dbReference>
<dbReference type="PANTHER" id="PTHR11946:SF93">
    <property type="entry name" value="VALINE--TRNA LIGASE, CHLOROPLASTIC_MITOCHONDRIAL 2"/>
    <property type="match status" value="1"/>
</dbReference>
<dbReference type="PANTHER" id="PTHR11946">
    <property type="entry name" value="VALYL-TRNA SYNTHETASES"/>
    <property type="match status" value="1"/>
</dbReference>
<dbReference type="Pfam" id="PF08264">
    <property type="entry name" value="Anticodon_1"/>
    <property type="match status" value="1"/>
</dbReference>
<dbReference type="Pfam" id="PF00133">
    <property type="entry name" value="tRNA-synt_1"/>
    <property type="match status" value="1"/>
</dbReference>
<dbReference type="Pfam" id="PF10458">
    <property type="entry name" value="Val_tRNA-synt_C"/>
    <property type="match status" value="1"/>
</dbReference>
<dbReference type="PRINTS" id="PR00986">
    <property type="entry name" value="TRNASYNTHVAL"/>
</dbReference>
<dbReference type="SUPFAM" id="SSF47323">
    <property type="entry name" value="Anticodon-binding domain of a subclass of class I aminoacyl-tRNA synthetases"/>
    <property type="match status" value="1"/>
</dbReference>
<dbReference type="SUPFAM" id="SSF52374">
    <property type="entry name" value="Nucleotidylyl transferase"/>
    <property type="match status" value="1"/>
</dbReference>
<dbReference type="SUPFAM" id="SSF46589">
    <property type="entry name" value="tRNA-binding arm"/>
    <property type="match status" value="1"/>
</dbReference>
<dbReference type="SUPFAM" id="SSF50677">
    <property type="entry name" value="ValRS/IleRS/LeuRS editing domain"/>
    <property type="match status" value="1"/>
</dbReference>
<dbReference type="PROSITE" id="PS00178">
    <property type="entry name" value="AA_TRNA_LIGASE_I"/>
    <property type="match status" value="1"/>
</dbReference>
<feature type="chain" id="PRO_0000106239" description="Valine--tRNA ligase">
    <location>
        <begin position="1"/>
        <end position="862"/>
    </location>
</feature>
<feature type="coiled-coil region" evidence="2">
    <location>
        <begin position="802"/>
        <end position="862"/>
    </location>
</feature>
<feature type="short sequence motif" description="'HIGH' region">
    <location>
        <begin position="44"/>
        <end position="53"/>
    </location>
</feature>
<feature type="short sequence motif" description="'KMSKS' region">
    <location>
        <begin position="528"/>
        <end position="532"/>
    </location>
</feature>
<feature type="binding site" evidence="1">
    <location>
        <position position="176"/>
    </location>
    <ligand>
        <name>Zn(2+)</name>
        <dbReference type="ChEBI" id="CHEBI:29105"/>
        <label>1</label>
    </ligand>
</feature>
<feature type="binding site" evidence="1">
    <location>
        <position position="179"/>
    </location>
    <ligand>
        <name>Zn(2+)</name>
        <dbReference type="ChEBI" id="CHEBI:29105"/>
        <label>1</label>
    </ligand>
</feature>
<feature type="binding site" evidence="1">
    <location>
        <position position="344"/>
    </location>
    <ligand>
        <name>Zn(2+)</name>
        <dbReference type="ChEBI" id="CHEBI:29105"/>
        <label>1</label>
    </ligand>
</feature>
<feature type="binding site" evidence="1">
    <location>
        <position position="347"/>
    </location>
    <ligand>
        <name>Zn(2+)</name>
        <dbReference type="ChEBI" id="CHEBI:29105"/>
        <label>1</label>
    </ligand>
</feature>
<feature type="binding site" evidence="1">
    <location>
        <position position="417"/>
    </location>
    <ligand>
        <name>Zn(2+)</name>
        <dbReference type="ChEBI" id="CHEBI:29105"/>
        <label>2</label>
    </ligand>
</feature>
<feature type="binding site" evidence="1">
    <location>
        <position position="420"/>
    </location>
    <ligand>
        <name>Zn(2+)</name>
        <dbReference type="ChEBI" id="CHEBI:29105"/>
        <label>2</label>
    </ligand>
</feature>
<feature type="binding site" evidence="1">
    <location>
        <position position="438"/>
    </location>
    <ligand>
        <name>Zn(2+)</name>
        <dbReference type="ChEBI" id="CHEBI:29105"/>
        <label>2</label>
    </ligand>
</feature>
<feature type="binding site" evidence="1">
    <location>
        <position position="441"/>
    </location>
    <ligand>
        <name>Zn(2+)</name>
        <dbReference type="ChEBI" id="CHEBI:29105"/>
        <label>2</label>
    </ligand>
</feature>
<feature type="binding site" evidence="2">
    <location>
        <position position="531"/>
    </location>
    <ligand>
        <name>ATP</name>
        <dbReference type="ChEBI" id="CHEBI:30616"/>
    </ligand>
</feature>
<feature type="sequence conflict" description="In Ref. 1; CAA71837." evidence="3" ref="1">
    <original>KRSRAVR</original>
    <variation>NAPAVP</variation>
    <location>
        <begin position="148"/>
        <end position="154"/>
    </location>
</feature>
<feature type="sequence conflict" description="In Ref. 1." evidence="3" ref="1">
    <location>
        <begin position="247"/>
        <end position="253"/>
    </location>
</feature>
<feature type="sequence conflict" description="In Ref. 1; CAA71837." evidence="3" ref="1">
    <original>S</original>
    <variation>T</variation>
    <location>
        <position position="612"/>
    </location>
</feature>
<protein>
    <recommendedName>
        <fullName evidence="2">Valine--tRNA ligase</fullName>
        <ecNumber evidence="2">6.1.1.9</ecNumber>
    </recommendedName>
    <alternativeName>
        <fullName evidence="2">Valyl-tRNA synthetase</fullName>
        <shortName evidence="2">ValRS</shortName>
    </alternativeName>
</protein>